<reference key="1">
    <citation type="journal article" date="2004" name="Nat. Genet.">
        <title>Evidence in the Legionella pneumophila genome for exploitation of host cell functions and high genome plasticity.</title>
        <authorList>
            <person name="Cazalet C."/>
            <person name="Rusniok C."/>
            <person name="Brueggemann H."/>
            <person name="Zidane N."/>
            <person name="Magnier A."/>
            <person name="Ma L."/>
            <person name="Tichit M."/>
            <person name="Jarraud S."/>
            <person name="Bouchier C."/>
            <person name="Vandenesch F."/>
            <person name="Kunst F."/>
            <person name="Etienne J."/>
            <person name="Glaser P."/>
            <person name="Buchrieser C."/>
        </authorList>
    </citation>
    <scope>NUCLEOTIDE SEQUENCE [LARGE SCALE GENOMIC DNA]</scope>
    <source>
        <strain>Paris</strain>
    </source>
</reference>
<sequence>MGEEGFLAHFAFSIGGLPITQSVLTTWFIMISLFIMAWSTTYKCSLLQPSTYQLIWEGVLSTMYDAIKEVLPDHVELIFPFVATLWIFILVSNLIGVIPGFYSPTADLSVTASLAIMTFLSVHWFGIRAEGWREYLKHYIKPTPFLLPFHLISEISRTLALAVRLFGNIMSLQLTALIVLMIAGFLVPIPILILHIIEAIIQAYIFGMLALIYIAGGIQAHELKSQGESL</sequence>
<name>ATP6_LEGPA</name>
<feature type="chain" id="PRO_0000362337" description="ATP synthase subunit a">
    <location>
        <begin position="1"/>
        <end position="230"/>
    </location>
</feature>
<feature type="transmembrane region" description="Helical" evidence="1">
    <location>
        <begin position="17"/>
        <end position="37"/>
    </location>
</feature>
<feature type="transmembrane region" description="Helical" evidence="1">
    <location>
        <begin position="78"/>
        <end position="98"/>
    </location>
</feature>
<feature type="transmembrane region" description="Helical" evidence="1">
    <location>
        <begin position="107"/>
        <end position="127"/>
    </location>
</feature>
<feature type="transmembrane region" description="Helical" evidence="1">
    <location>
        <begin position="165"/>
        <end position="187"/>
    </location>
</feature>
<feature type="transmembrane region" description="Helical" evidence="1">
    <location>
        <begin position="198"/>
        <end position="218"/>
    </location>
</feature>
<protein>
    <recommendedName>
        <fullName evidence="1">ATP synthase subunit a</fullName>
    </recommendedName>
    <alternativeName>
        <fullName evidence="1">ATP synthase F0 sector subunit a</fullName>
    </alternativeName>
    <alternativeName>
        <fullName evidence="1">F-ATPase subunit 6</fullName>
    </alternativeName>
</protein>
<gene>
    <name evidence="1" type="primary">atpB</name>
    <name type="ordered locus">lpp2331</name>
</gene>
<accession>Q5X2Q6</accession>
<comment type="function">
    <text evidence="1">Key component of the proton channel; it plays a direct role in the translocation of protons across the membrane.</text>
</comment>
<comment type="subunit">
    <text evidence="1">F-type ATPases have 2 components, CF(1) - the catalytic core - and CF(0) - the membrane proton channel. CF(1) has five subunits: alpha(3), beta(3), gamma(1), delta(1), epsilon(1). CF(0) has three main subunits: a(1), b(2) and c(9-12). The alpha and beta chains form an alternating ring which encloses part of the gamma chain. CF(1) is attached to CF(0) by a central stalk formed by the gamma and epsilon chains, while a peripheral stalk is formed by the delta and b chains.</text>
</comment>
<comment type="subcellular location">
    <subcellularLocation>
        <location evidence="1">Cell inner membrane</location>
        <topology evidence="1">Multi-pass membrane protein</topology>
    </subcellularLocation>
</comment>
<comment type="similarity">
    <text evidence="1">Belongs to the ATPase A chain family.</text>
</comment>
<proteinExistence type="inferred from homology"/>
<evidence type="ECO:0000255" key="1">
    <source>
        <dbReference type="HAMAP-Rule" id="MF_01393"/>
    </source>
</evidence>
<keyword id="KW-0066">ATP synthesis</keyword>
<keyword id="KW-0997">Cell inner membrane</keyword>
<keyword id="KW-1003">Cell membrane</keyword>
<keyword id="KW-0138">CF(0)</keyword>
<keyword id="KW-0375">Hydrogen ion transport</keyword>
<keyword id="KW-0406">Ion transport</keyword>
<keyword id="KW-0472">Membrane</keyword>
<keyword id="KW-0812">Transmembrane</keyword>
<keyword id="KW-1133">Transmembrane helix</keyword>
<keyword id="KW-0813">Transport</keyword>
<dbReference type="EMBL" id="CR628336">
    <property type="protein sequence ID" value="CAH13484.1"/>
    <property type="molecule type" value="Genomic_DNA"/>
</dbReference>
<dbReference type="SMR" id="Q5X2Q6"/>
<dbReference type="KEGG" id="lpp:lpp2331"/>
<dbReference type="LegioList" id="lpp2331"/>
<dbReference type="HOGENOM" id="CLU_041018_2_5_6"/>
<dbReference type="GO" id="GO:0005886">
    <property type="term" value="C:plasma membrane"/>
    <property type="evidence" value="ECO:0007669"/>
    <property type="project" value="UniProtKB-SubCell"/>
</dbReference>
<dbReference type="GO" id="GO:0045259">
    <property type="term" value="C:proton-transporting ATP synthase complex"/>
    <property type="evidence" value="ECO:0007669"/>
    <property type="project" value="UniProtKB-KW"/>
</dbReference>
<dbReference type="GO" id="GO:0046933">
    <property type="term" value="F:proton-transporting ATP synthase activity, rotational mechanism"/>
    <property type="evidence" value="ECO:0007669"/>
    <property type="project" value="UniProtKB-UniRule"/>
</dbReference>
<dbReference type="GO" id="GO:0042777">
    <property type="term" value="P:proton motive force-driven plasma membrane ATP synthesis"/>
    <property type="evidence" value="ECO:0007669"/>
    <property type="project" value="TreeGrafter"/>
</dbReference>
<dbReference type="CDD" id="cd00310">
    <property type="entry name" value="ATP-synt_Fo_a_6"/>
    <property type="match status" value="1"/>
</dbReference>
<dbReference type="Gene3D" id="1.20.120.220">
    <property type="entry name" value="ATP synthase, F0 complex, subunit A"/>
    <property type="match status" value="1"/>
</dbReference>
<dbReference type="HAMAP" id="MF_01393">
    <property type="entry name" value="ATP_synth_a_bact"/>
    <property type="match status" value="1"/>
</dbReference>
<dbReference type="InterPro" id="IPR045082">
    <property type="entry name" value="ATP_syn_F0_a_bact/chloroplast"/>
</dbReference>
<dbReference type="InterPro" id="IPR000568">
    <property type="entry name" value="ATP_synth_F0_asu"/>
</dbReference>
<dbReference type="InterPro" id="IPR023011">
    <property type="entry name" value="ATP_synth_F0_asu_AS"/>
</dbReference>
<dbReference type="InterPro" id="IPR035908">
    <property type="entry name" value="F0_ATP_A_sf"/>
</dbReference>
<dbReference type="NCBIfam" id="TIGR01131">
    <property type="entry name" value="ATP_synt_6_or_A"/>
    <property type="match status" value="1"/>
</dbReference>
<dbReference type="NCBIfam" id="NF009954">
    <property type="entry name" value="PRK13420.1"/>
    <property type="match status" value="1"/>
</dbReference>
<dbReference type="PANTHER" id="PTHR42823">
    <property type="entry name" value="ATP SYNTHASE SUBUNIT A, CHLOROPLASTIC"/>
    <property type="match status" value="1"/>
</dbReference>
<dbReference type="PANTHER" id="PTHR42823:SF3">
    <property type="entry name" value="ATP SYNTHASE SUBUNIT A, CHLOROPLASTIC"/>
    <property type="match status" value="1"/>
</dbReference>
<dbReference type="Pfam" id="PF00119">
    <property type="entry name" value="ATP-synt_A"/>
    <property type="match status" value="1"/>
</dbReference>
<dbReference type="PRINTS" id="PR00123">
    <property type="entry name" value="ATPASEA"/>
</dbReference>
<dbReference type="SUPFAM" id="SSF81336">
    <property type="entry name" value="F1F0 ATP synthase subunit A"/>
    <property type="match status" value="1"/>
</dbReference>
<dbReference type="PROSITE" id="PS00449">
    <property type="entry name" value="ATPASE_A"/>
    <property type="match status" value="1"/>
</dbReference>
<organism>
    <name type="scientific">Legionella pneumophila (strain Paris)</name>
    <dbReference type="NCBI Taxonomy" id="297246"/>
    <lineage>
        <taxon>Bacteria</taxon>
        <taxon>Pseudomonadati</taxon>
        <taxon>Pseudomonadota</taxon>
        <taxon>Gammaproteobacteria</taxon>
        <taxon>Legionellales</taxon>
        <taxon>Legionellaceae</taxon>
        <taxon>Legionella</taxon>
    </lineage>
</organism>